<dbReference type="EMBL" id="CP000950">
    <property type="protein sequence ID" value="ACA67416.1"/>
    <property type="molecule type" value="Genomic_DNA"/>
</dbReference>
<dbReference type="RefSeq" id="WP_002215935.1">
    <property type="nucleotide sequence ID" value="NZ_CP009792.1"/>
</dbReference>
<dbReference type="SMR" id="B1JR56"/>
<dbReference type="GeneID" id="57976042"/>
<dbReference type="KEGG" id="ypy:YPK_1118"/>
<dbReference type="PATRIC" id="fig|502800.11.peg.1748"/>
<dbReference type="GO" id="GO:0010181">
    <property type="term" value="F:FMN binding"/>
    <property type="evidence" value="ECO:0007669"/>
    <property type="project" value="InterPro"/>
</dbReference>
<dbReference type="GO" id="GO:0036211">
    <property type="term" value="P:protein modification process"/>
    <property type="evidence" value="ECO:0007669"/>
    <property type="project" value="InterPro"/>
</dbReference>
<dbReference type="FunFam" id="3.40.50.360:FF:000005">
    <property type="entry name" value="Protein NrdI"/>
    <property type="match status" value="1"/>
</dbReference>
<dbReference type="Gene3D" id="3.40.50.360">
    <property type="match status" value="1"/>
</dbReference>
<dbReference type="HAMAP" id="MF_00128">
    <property type="entry name" value="NrdI"/>
    <property type="match status" value="1"/>
</dbReference>
<dbReference type="InterPro" id="IPR029039">
    <property type="entry name" value="Flavoprotein-like_sf"/>
</dbReference>
<dbReference type="InterPro" id="IPR020852">
    <property type="entry name" value="RNR_Ib_NrdI_bac"/>
</dbReference>
<dbReference type="InterPro" id="IPR004465">
    <property type="entry name" value="RNR_NrdI"/>
</dbReference>
<dbReference type="NCBIfam" id="TIGR00333">
    <property type="entry name" value="nrdI"/>
    <property type="match status" value="1"/>
</dbReference>
<dbReference type="PANTHER" id="PTHR37297">
    <property type="entry name" value="PROTEIN NRDI"/>
    <property type="match status" value="1"/>
</dbReference>
<dbReference type="PANTHER" id="PTHR37297:SF1">
    <property type="entry name" value="PROTEIN NRDI"/>
    <property type="match status" value="1"/>
</dbReference>
<dbReference type="Pfam" id="PF07972">
    <property type="entry name" value="Flavodoxin_NdrI"/>
    <property type="match status" value="1"/>
</dbReference>
<dbReference type="PIRSF" id="PIRSF005087">
    <property type="entry name" value="NrdI"/>
    <property type="match status" value="1"/>
</dbReference>
<dbReference type="SUPFAM" id="SSF52218">
    <property type="entry name" value="Flavoproteins"/>
    <property type="match status" value="1"/>
</dbReference>
<organism>
    <name type="scientific">Yersinia pseudotuberculosis serotype O:3 (strain YPIII)</name>
    <dbReference type="NCBI Taxonomy" id="502800"/>
    <lineage>
        <taxon>Bacteria</taxon>
        <taxon>Pseudomonadati</taxon>
        <taxon>Pseudomonadota</taxon>
        <taxon>Gammaproteobacteria</taxon>
        <taxon>Enterobacterales</taxon>
        <taxon>Yersiniaceae</taxon>
        <taxon>Yersinia</taxon>
    </lineage>
</organism>
<name>NRDI_YERPY</name>
<comment type="function">
    <text evidence="1">Probably involved in ribonucleotide reductase function.</text>
</comment>
<comment type="similarity">
    <text evidence="1">Belongs to the NrdI family.</text>
</comment>
<feature type="chain" id="PRO_1000095638" description="Protein NrdI">
    <location>
        <begin position="1"/>
        <end position="134"/>
    </location>
</feature>
<accession>B1JR56</accession>
<gene>
    <name evidence="1" type="primary">nrdI</name>
    <name type="ordered locus">YPK_1118</name>
</gene>
<proteinExistence type="inferred from homology"/>
<sequence length="134" mass="14916">MNPLVYFSSSSENSHRFVEKLQLPAIRIPIAGAREKLRVEQPYILLVPSYGGGSPVGAVPIQVIRFLNDVHNRSLIRGVIAAGNTNFGDAYCLAGDIISHKCQVPYLYRFELLGTAEDVANVRKGVTEFWQRQN</sequence>
<protein>
    <recommendedName>
        <fullName evidence="1">Protein NrdI</fullName>
    </recommendedName>
</protein>
<reference key="1">
    <citation type="submission" date="2008-02" db="EMBL/GenBank/DDBJ databases">
        <title>Complete sequence of Yersinia pseudotuberculosis YPIII.</title>
        <authorList>
            <consortium name="US DOE Joint Genome Institute"/>
            <person name="Copeland A."/>
            <person name="Lucas S."/>
            <person name="Lapidus A."/>
            <person name="Glavina del Rio T."/>
            <person name="Dalin E."/>
            <person name="Tice H."/>
            <person name="Bruce D."/>
            <person name="Goodwin L."/>
            <person name="Pitluck S."/>
            <person name="Munk A.C."/>
            <person name="Brettin T."/>
            <person name="Detter J.C."/>
            <person name="Han C."/>
            <person name="Tapia R."/>
            <person name="Schmutz J."/>
            <person name="Larimer F."/>
            <person name="Land M."/>
            <person name="Hauser L."/>
            <person name="Challacombe J.F."/>
            <person name="Green L."/>
            <person name="Lindler L.E."/>
            <person name="Nikolich M.P."/>
            <person name="Richardson P."/>
        </authorList>
    </citation>
    <scope>NUCLEOTIDE SEQUENCE [LARGE SCALE GENOMIC DNA]</scope>
    <source>
        <strain>YPIII</strain>
    </source>
</reference>
<evidence type="ECO:0000255" key="1">
    <source>
        <dbReference type="HAMAP-Rule" id="MF_00128"/>
    </source>
</evidence>